<organism>
    <name type="scientific">Ostreococcus tauri</name>
    <dbReference type="NCBI Taxonomy" id="70448"/>
    <lineage>
        <taxon>Eukaryota</taxon>
        <taxon>Viridiplantae</taxon>
        <taxon>Chlorophyta</taxon>
        <taxon>Mamiellophyceae</taxon>
        <taxon>Mamiellales</taxon>
        <taxon>Bathycoccaceae</taxon>
        <taxon>Ostreococcus</taxon>
    </lineage>
</organism>
<feature type="chain" id="PRO_0000276419" description="Large ribosomal subunit protein bL20c">
    <location>
        <begin position="1"/>
        <end position="111"/>
    </location>
</feature>
<reference key="1">
    <citation type="journal article" date="2007" name="Mol. Biol. Evol.">
        <title>The complete chloroplast and mitochondrial DNA sequence of Ostreococcus tauri: organelle genomes of the smallest eukaryote are examples of compaction.</title>
        <authorList>
            <person name="Robbens S."/>
            <person name="Derelle E."/>
            <person name="Ferraz C."/>
            <person name="Wuyts J."/>
            <person name="Moreau H."/>
            <person name="Van de Peer Y."/>
        </authorList>
    </citation>
    <scope>NUCLEOTIDE SEQUENCE [LARGE SCALE GENOMIC DNA]</scope>
    <source>
        <strain>OTTH0595</strain>
    </source>
</reference>
<keyword id="KW-0150">Chloroplast</keyword>
<keyword id="KW-0934">Plastid</keyword>
<keyword id="KW-1185">Reference proteome</keyword>
<keyword id="KW-0687">Ribonucleoprotein</keyword>
<keyword id="KW-0689">Ribosomal protein</keyword>
<keyword id="KW-0694">RNA-binding</keyword>
<keyword id="KW-0699">rRNA-binding</keyword>
<protein>
    <recommendedName>
        <fullName evidence="1">Large ribosomal subunit protein bL20c</fullName>
    </recommendedName>
    <alternativeName>
        <fullName evidence="2">50S ribosomal protein L20, chloroplastic</fullName>
    </alternativeName>
</protein>
<geneLocation type="chloroplast"/>
<dbReference type="EMBL" id="CR954199">
    <property type="protein sequence ID" value="CAL36380.1"/>
    <property type="molecule type" value="Genomic_DNA"/>
</dbReference>
<dbReference type="RefSeq" id="YP_717258.1">
    <property type="nucleotide sequence ID" value="NC_008289.1"/>
</dbReference>
<dbReference type="SMR" id="Q0P3J7"/>
<dbReference type="FunCoup" id="Q0P3J7">
    <property type="interactions" value="42"/>
</dbReference>
<dbReference type="STRING" id="70448.Q0P3J7"/>
<dbReference type="GeneID" id="4238792"/>
<dbReference type="KEGG" id="ota:OstapCp55"/>
<dbReference type="eggNOG" id="KOG4707">
    <property type="taxonomic scope" value="Eukaryota"/>
</dbReference>
<dbReference type="InParanoid" id="Q0P3J7"/>
<dbReference type="Proteomes" id="UP000009170">
    <property type="component" value="Chloroplast"/>
</dbReference>
<dbReference type="GO" id="GO:0009507">
    <property type="term" value="C:chloroplast"/>
    <property type="evidence" value="ECO:0007669"/>
    <property type="project" value="UniProtKB-SubCell"/>
</dbReference>
<dbReference type="GO" id="GO:1990904">
    <property type="term" value="C:ribonucleoprotein complex"/>
    <property type="evidence" value="ECO:0007669"/>
    <property type="project" value="UniProtKB-KW"/>
</dbReference>
<dbReference type="GO" id="GO:0005840">
    <property type="term" value="C:ribosome"/>
    <property type="evidence" value="ECO:0007669"/>
    <property type="project" value="UniProtKB-KW"/>
</dbReference>
<dbReference type="GO" id="GO:0019843">
    <property type="term" value="F:rRNA binding"/>
    <property type="evidence" value="ECO:0007669"/>
    <property type="project" value="UniProtKB-UniRule"/>
</dbReference>
<dbReference type="GO" id="GO:0003735">
    <property type="term" value="F:structural constituent of ribosome"/>
    <property type="evidence" value="ECO:0007669"/>
    <property type="project" value="InterPro"/>
</dbReference>
<dbReference type="GO" id="GO:0000027">
    <property type="term" value="P:ribosomal large subunit assembly"/>
    <property type="evidence" value="ECO:0007669"/>
    <property type="project" value="UniProtKB-UniRule"/>
</dbReference>
<dbReference type="GO" id="GO:0006412">
    <property type="term" value="P:translation"/>
    <property type="evidence" value="ECO:0007669"/>
    <property type="project" value="InterPro"/>
</dbReference>
<dbReference type="CDD" id="cd07026">
    <property type="entry name" value="Ribosomal_L20"/>
    <property type="match status" value="1"/>
</dbReference>
<dbReference type="FunFam" id="1.10.1900.20:FF:000001">
    <property type="entry name" value="50S ribosomal protein L20"/>
    <property type="match status" value="1"/>
</dbReference>
<dbReference type="Gene3D" id="6.10.160.10">
    <property type="match status" value="1"/>
</dbReference>
<dbReference type="Gene3D" id="1.10.1900.20">
    <property type="entry name" value="Ribosomal protein L20"/>
    <property type="match status" value="1"/>
</dbReference>
<dbReference type="HAMAP" id="MF_00382">
    <property type="entry name" value="Ribosomal_bL20"/>
    <property type="match status" value="1"/>
</dbReference>
<dbReference type="InterPro" id="IPR005813">
    <property type="entry name" value="Ribosomal_bL20"/>
</dbReference>
<dbReference type="InterPro" id="IPR035566">
    <property type="entry name" value="Ribosomal_protein_bL20_C"/>
</dbReference>
<dbReference type="NCBIfam" id="TIGR01032">
    <property type="entry name" value="rplT_bact"/>
    <property type="match status" value="1"/>
</dbReference>
<dbReference type="PANTHER" id="PTHR10986">
    <property type="entry name" value="39S RIBOSOMAL PROTEIN L20"/>
    <property type="match status" value="1"/>
</dbReference>
<dbReference type="Pfam" id="PF00453">
    <property type="entry name" value="Ribosomal_L20"/>
    <property type="match status" value="1"/>
</dbReference>
<dbReference type="PRINTS" id="PR00062">
    <property type="entry name" value="RIBOSOMALL20"/>
</dbReference>
<dbReference type="SUPFAM" id="SSF74731">
    <property type="entry name" value="Ribosomal protein L20"/>
    <property type="match status" value="1"/>
</dbReference>
<gene>
    <name evidence="1" type="primary">rpl20</name>
    <name type="ordered locus">OtCpg00550</name>
</gene>
<evidence type="ECO:0000255" key="1">
    <source>
        <dbReference type="HAMAP-Rule" id="MF_00382"/>
    </source>
</evidence>
<evidence type="ECO:0000305" key="2"/>
<comment type="function">
    <text evidence="1">Binds directly to 23S ribosomal RNA and is necessary for the in vitro assembly process of the 50S ribosomal subunit. It is not involved in the protein synthesizing functions of that subunit.</text>
</comment>
<comment type="subcellular location">
    <subcellularLocation>
        <location>Plastid</location>
        <location>Chloroplast</location>
    </subcellularLocation>
</comment>
<comment type="similarity">
    <text evidence="1">Belongs to the bacterial ribosomal protein bL20 family.</text>
</comment>
<proteinExistence type="inferred from homology"/>
<name>RK20_OSTTA</name>
<sequence length="111" mass="13208">MTRVKRGNVARKRRNKILELNRGYRGSHSTLFRTAQQRTLKALTTAYTDRRKKKRTYRRLWIRRINAAVRTKGTTYSKFIHTMKKDQIMLNRKVLSQLVILDPPSFSTLTK</sequence>
<accession>Q0P3J7</accession>